<evidence type="ECO:0000255" key="1">
    <source>
        <dbReference type="HAMAP-Rule" id="MF_01617"/>
    </source>
</evidence>
<sequence length="714" mass="77144">MEMASAFTLNVRLDNIAIITIDVPGEKMNTLKAEFASQVRAIIKQLRENKELRGVVFVSAKPDNFIAGADINMIGNCKTAQEAEVLARQGQQLMAEIHALPIPVIAAIHGACLGGGLELALACHGRVCTDDPKTVLGLPEVQLGLLPGSGGTQRLPRLIGVSTALEMILTGKQLRAKQAVKLGLVDDVVPHSILLEAAVELAKQDRPSSRPLPVRERILAGPLGRALLFKMVGKKTEHKTQGNYPATERILEVVETGLAQGTSSGYDAEARAFGELAMTPQSQALRNIFFASTEVKKDPGSDAPPAPLNSVGILGGGLMGGGIAYVTACKAGLPVRIKDINPRGINHALKYSWDQLEGKVRRRHLKASERDKQLALISGTTDYCGFAHRDLIIEAVFENLELKQQMVAEVEQNCATHTIFASNTSSLPIGDIAAHAARPEQVIGLHFFSPVEKMPLVEIIPHASTSAQTIATTVKLAKKQGKTPIVVRDKAGFYVNRILAPYINEAIRMLTEGERIEHIDAALVKFGFPVGPIQLLDEVGIDTGTKIIPVLEAAYGERFSAPANVVSSILNDDRKGRKNGRGFYLYGQKGRKSKKQVDPAIYPLIGAQGQGRLSAPQVAERCVMLMLNEAVRCLDEQVIRSVRDGDIGAVFGIGFPPFLGGPFRYIDSLGAGEVVAIMQRLATQYGSRFTPCDRLVEMSERGESFWKTTATDLQ</sequence>
<protein>
    <recommendedName>
        <fullName evidence="1">Fatty acid oxidation complex subunit alpha</fullName>
    </recommendedName>
    <domain>
        <recommendedName>
            <fullName evidence="1">Enoyl-CoA hydratase/3-hydroxybutyryl-CoA epimerase</fullName>
            <ecNumber evidence="1">4.2.1.17</ecNumber>
            <ecNumber evidence="1">5.1.2.3</ecNumber>
        </recommendedName>
    </domain>
    <domain>
        <recommendedName>
            <fullName evidence="1">3-hydroxyacyl-CoA dehydrogenase</fullName>
            <ecNumber evidence="1">1.1.1.35</ecNumber>
        </recommendedName>
    </domain>
</protein>
<reference key="1">
    <citation type="journal article" date="2009" name="PLoS Genet.">
        <title>Organised genome dynamics in the Escherichia coli species results in highly diverse adaptive paths.</title>
        <authorList>
            <person name="Touchon M."/>
            <person name="Hoede C."/>
            <person name="Tenaillon O."/>
            <person name="Barbe V."/>
            <person name="Baeriswyl S."/>
            <person name="Bidet P."/>
            <person name="Bingen E."/>
            <person name="Bonacorsi S."/>
            <person name="Bouchier C."/>
            <person name="Bouvet O."/>
            <person name="Calteau A."/>
            <person name="Chiapello H."/>
            <person name="Clermont O."/>
            <person name="Cruveiller S."/>
            <person name="Danchin A."/>
            <person name="Diard M."/>
            <person name="Dossat C."/>
            <person name="Karoui M.E."/>
            <person name="Frapy E."/>
            <person name="Garry L."/>
            <person name="Ghigo J.M."/>
            <person name="Gilles A.M."/>
            <person name="Johnson J."/>
            <person name="Le Bouguenec C."/>
            <person name="Lescat M."/>
            <person name="Mangenot S."/>
            <person name="Martinez-Jehanne V."/>
            <person name="Matic I."/>
            <person name="Nassif X."/>
            <person name="Oztas S."/>
            <person name="Petit M.A."/>
            <person name="Pichon C."/>
            <person name="Rouy Z."/>
            <person name="Ruf C.S."/>
            <person name="Schneider D."/>
            <person name="Tourret J."/>
            <person name="Vacherie B."/>
            <person name="Vallenet D."/>
            <person name="Medigue C."/>
            <person name="Rocha E.P.C."/>
            <person name="Denamur E."/>
        </authorList>
    </citation>
    <scope>NUCLEOTIDE SEQUENCE [LARGE SCALE GENOMIC DNA]</scope>
    <source>
        <strain>ED1a</strain>
    </source>
</reference>
<keyword id="KW-0963">Cytoplasm</keyword>
<keyword id="KW-0276">Fatty acid metabolism</keyword>
<keyword id="KW-0413">Isomerase</keyword>
<keyword id="KW-0442">Lipid degradation</keyword>
<keyword id="KW-0443">Lipid metabolism</keyword>
<keyword id="KW-0456">Lyase</keyword>
<keyword id="KW-0511">Multifunctional enzyme</keyword>
<keyword id="KW-0520">NAD</keyword>
<keyword id="KW-0560">Oxidoreductase</keyword>
<proteinExistence type="inferred from homology"/>
<feature type="chain" id="PRO_1000185939" description="Fatty acid oxidation complex subunit alpha">
    <location>
        <begin position="1"/>
        <end position="714"/>
    </location>
</feature>
<feature type="region of interest" description="Enoyl-CoA hydratase" evidence="1">
    <location>
        <begin position="1"/>
        <end position="190"/>
    </location>
</feature>
<feature type="region of interest" description="3-hydroxyacyl-CoA dehydrogenase" evidence="1">
    <location>
        <begin position="306"/>
        <end position="714"/>
    </location>
</feature>
<feature type="site" description="Important for catalytic activity" evidence="1">
    <location>
        <position position="118"/>
    </location>
</feature>
<feature type="site" description="Important for catalytic activity" evidence="1">
    <location>
        <position position="140"/>
    </location>
</feature>
<dbReference type="EC" id="4.2.1.17" evidence="1"/>
<dbReference type="EC" id="5.1.2.3" evidence="1"/>
<dbReference type="EC" id="1.1.1.35" evidence="1"/>
<dbReference type="EMBL" id="CU928162">
    <property type="protein sequence ID" value="CAR08982.2"/>
    <property type="molecule type" value="Genomic_DNA"/>
</dbReference>
<dbReference type="RefSeq" id="WP_000425022.1">
    <property type="nucleotide sequence ID" value="NC_011745.1"/>
</dbReference>
<dbReference type="SMR" id="B7MY16"/>
<dbReference type="KEGG" id="ecq:ECED1_2804"/>
<dbReference type="HOGENOM" id="CLU_009834_16_1_6"/>
<dbReference type="UniPathway" id="UPA00659"/>
<dbReference type="Proteomes" id="UP000000748">
    <property type="component" value="Chromosome"/>
</dbReference>
<dbReference type="GO" id="GO:0005737">
    <property type="term" value="C:cytoplasm"/>
    <property type="evidence" value="ECO:0007669"/>
    <property type="project" value="UniProtKB-SubCell"/>
</dbReference>
<dbReference type="GO" id="GO:0008692">
    <property type="term" value="F:3-hydroxybutyryl-CoA epimerase activity"/>
    <property type="evidence" value="ECO:0007669"/>
    <property type="project" value="UniProtKB-UniRule"/>
</dbReference>
<dbReference type="GO" id="GO:0004300">
    <property type="term" value="F:enoyl-CoA hydratase activity"/>
    <property type="evidence" value="ECO:0007669"/>
    <property type="project" value="UniProtKB-UniRule"/>
</dbReference>
<dbReference type="GO" id="GO:0016509">
    <property type="term" value="F:long-chain-3-hydroxyacyl-CoA dehydrogenase activity"/>
    <property type="evidence" value="ECO:0007669"/>
    <property type="project" value="TreeGrafter"/>
</dbReference>
<dbReference type="GO" id="GO:0070403">
    <property type="term" value="F:NAD+ binding"/>
    <property type="evidence" value="ECO:0007669"/>
    <property type="project" value="InterPro"/>
</dbReference>
<dbReference type="GO" id="GO:0006635">
    <property type="term" value="P:fatty acid beta-oxidation"/>
    <property type="evidence" value="ECO:0007669"/>
    <property type="project" value="UniProtKB-UniRule"/>
</dbReference>
<dbReference type="CDD" id="cd06558">
    <property type="entry name" value="crotonase-like"/>
    <property type="match status" value="1"/>
</dbReference>
<dbReference type="FunFam" id="1.10.1040.50:FF:000003">
    <property type="entry name" value="Fatty acid oxidation complex subunit alpha"/>
    <property type="match status" value="1"/>
</dbReference>
<dbReference type="FunFam" id="3.90.226.10:FF:000011">
    <property type="entry name" value="Fatty acid oxidation complex subunit alpha"/>
    <property type="match status" value="1"/>
</dbReference>
<dbReference type="FunFam" id="3.40.50.720:FF:000009">
    <property type="entry name" value="Fatty oxidation complex, alpha subunit"/>
    <property type="match status" value="1"/>
</dbReference>
<dbReference type="Gene3D" id="1.10.1040.50">
    <property type="match status" value="1"/>
</dbReference>
<dbReference type="Gene3D" id="3.90.226.10">
    <property type="entry name" value="2-enoyl-CoA Hydratase, Chain A, domain 1"/>
    <property type="match status" value="1"/>
</dbReference>
<dbReference type="Gene3D" id="3.40.50.720">
    <property type="entry name" value="NAD(P)-binding Rossmann-like Domain"/>
    <property type="match status" value="1"/>
</dbReference>
<dbReference type="HAMAP" id="MF_01617">
    <property type="entry name" value="FadJ"/>
    <property type="match status" value="1"/>
</dbReference>
<dbReference type="InterPro" id="IPR006180">
    <property type="entry name" value="3-OHacyl-CoA_DH_CS"/>
</dbReference>
<dbReference type="InterPro" id="IPR006176">
    <property type="entry name" value="3-OHacyl-CoA_DH_NAD-bd"/>
</dbReference>
<dbReference type="InterPro" id="IPR006108">
    <property type="entry name" value="3HC_DH_C"/>
</dbReference>
<dbReference type="InterPro" id="IPR008927">
    <property type="entry name" value="6-PGluconate_DH-like_C_sf"/>
</dbReference>
<dbReference type="InterPro" id="IPR029045">
    <property type="entry name" value="ClpP/crotonase-like_dom_sf"/>
</dbReference>
<dbReference type="InterPro" id="IPR001753">
    <property type="entry name" value="Enoyl-CoA_hydra/iso"/>
</dbReference>
<dbReference type="InterPro" id="IPR050136">
    <property type="entry name" value="FA_oxidation_alpha_subunit"/>
</dbReference>
<dbReference type="InterPro" id="IPR012802">
    <property type="entry name" value="FadJ"/>
</dbReference>
<dbReference type="InterPro" id="IPR036291">
    <property type="entry name" value="NAD(P)-bd_dom_sf"/>
</dbReference>
<dbReference type="NCBIfam" id="TIGR02440">
    <property type="entry name" value="FadJ"/>
    <property type="match status" value="1"/>
</dbReference>
<dbReference type="NCBIfam" id="NF008363">
    <property type="entry name" value="PRK11154.1"/>
    <property type="match status" value="1"/>
</dbReference>
<dbReference type="PANTHER" id="PTHR43612">
    <property type="entry name" value="TRIFUNCTIONAL ENZYME SUBUNIT ALPHA"/>
    <property type="match status" value="1"/>
</dbReference>
<dbReference type="PANTHER" id="PTHR43612:SF3">
    <property type="entry name" value="TRIFUNCTIONAL ENZYME SUBUNIT ALPHA, MITOCHONDRIAL"/>
    <property type="match status" value="1"/>
</dbReference>
<dbReference type="Pfam" id="PF00725">
    <property type="entry name" value="3HCDH"/>
    <property type="match status" value="2"/>
</dbReference>
<dbReference type="Pfam" id="PF02737">
    <property type="entry name" value="3HCDH_N"/>
    <property type="match status" value="1"/>
</dbReference>
<dbReference type="Pfam" id="PF00378">
    <property type="entry name" value="ECH_1"/>
    <property type="match status" value="1"/>
</dbReference>
<dbReference type="SUPFAM" id="SSF48179">
    <property type="entry name" value="6-phosphogluconate dehydrogenase C-terminal domain-like"/>
    <property type="match status" value="2"/>
</dbReference>
<dbReference type="SUPFAM" id="SSF52096">
    <property type="entry name" value="ClpP/crotonase"/>
    <property type="match status" value="1"/>
</dbReference>
<dbReference type="SUPFAM" id="SSF51735">
    <property type="entry name" value="NAD(P)-binding Rossmann-fold domains"/>
    <property type="match status" value="1"/>
</dbReference>
<dbReference type="PROSITE" id="PS00067">
    <property type="entry name" value="3HCDH"/>
    <property type="match status" value="1"/>
</dbReference>
<gene>
    <name evidence="1" type="primary">fadJ</name>
    <name type="ordered locus">ECED1_2804</name>
</gene>
<name>FADJ_ECO81</name>
<organism>
    <name type="scientific">Escherichia coli O81 (strain ED1a)</name>
    <dbReference type="NCBI Taxonomy" id="585397"/>
    <lineage>
        <taxon>Bacteria</taxon>
        <taxon>Pseudomonadati</taxon>
        <taxon>Pseudomonadota</taxon>
        <taxon>Gammaproteobacteria</taxon>
        <taxon>Enterobacterales</taxon>
        <taxon>Enterobacteriaceae</taxon>
        <taxon>Escherichia</taxon>
    </lineage>
</organism>
<comment type="function">
    <text evidence="1">Catalyzes the formation of a hydroxyacyl-CoA by addition of water on enoyl-CoA. Also exhibits 3-hydroxyacyl-CoA epimerase and 3-hydroxyacyl-CoA dehydrogenase activities.</text>
</comment>
<comment type="catalytic activity">
    <reaction evidence="1">
        <text>a (3S)-3-hydroxyacyl-CoA = a (2E)-enoyl-CoA + H2O</text>
        <dbReference type="Rhea" id="RHEA:16105"/>
        <dbReference type="ChEBI" id="CHEBI:15377"/>
        <dbReference type="ChEBI" id="CHEBI:57318"/>
        <dbReference type="ChEBI" id="CHEBI:58856"/>
        <dbReference type="EC" id="4.2.1.17"/>
    </reaction>
</comment>
<comment type="catalytic activity">
    <reaction evidence="1">
        <text>a 4-saturated-(3S)-3-hydroxyacyl-CoA = a (3E)-enoyl-CoA + H2O</text>
        <dbReference type="Rhea" id="RHEA:20724"/>
        <dbReference type="ChEBI" id="CHEBI:15377"/>
        <dbReference type="ChEBI" id="CHEBI:58521"/>
        <dbReference type="ChEBI" id="CHEBI:137480"/>
        <dbReference type="EC" id="4.2.1.17"/>
    </reaction>
</comment>
<comment type="catalytic activity">
    <reaction evidence="1">
        <text>a (3S)-3-hydroxyacyl-CoA + NAD(+) = a 3-oxoacyl-CoA + NADH + H(+)</text>
        <dbReference type="Rhea" id="RHEA:22432"/>
        <dbReference type="ChEBI" id="CHEBI:15378"/>
        <dbReference type="ChEBI" id="CHEBI:57318"/>
        <dbReference type="ChEBI" id="CHEBI:57540"/>
        <dbReference type="ChEBI" id="CHEBI:57945"/>
        <dbReference type="ChEBI" id="CHEBI:90726"/>
        <dbReference type="EC" id="1.1.1.35"/>
    </reaction>
</comment>
<comment type="catalytic activity">
    <reaction evidence="1">
        <text>(3S)-3-hydroxybutanoyl-CoA = (3R)-3-hydroxybutanoyl-CoA</text>
        <dbReference type="Rhea" id="RHEA:21760"/>
        <dbReference type="ChEBI" id="CHEBI:57315"/>
        <dbReference type="ChEBI" id="CHEBI:57316"/>
        <dbReference type="EC" id="5.1.2.3"/>
    </reaction>
</comment>
<comment type="pathway">
    <text evidence="1">Lipid metabolism; fatty acid beta-oxidation.</text>
</comment>
<comment type="subunit">
    <text evidence="1">Heterotetramer of two alpha chains (FadJ) and two beta chains (FadI).</text>
</comment>
<comment type="subcellular location">
    <subcellularLocation>
        <location evidence="1">Cytoplasm</location>
    </subcellularLocation>
</comment>
<comment type="similarity">
    <text evidence="1">In the N-terminal section; belongs to the enoyl-CoA hydratase/isomerase family.</text>
</comment>
<comment type="similarity">
    <text evidence="1">In the central section; belongs to the 3-hydroxyacyl-CoA dehydrogenase family.</text>
</comment>
<accession>B7MY16</accession>